<reference key="1">
    <citation type="journal article" date="2007" name="Science">
        <title>Genomic minimalism in the early diverging intestinal parasite Giardia lamblia.</title>
        <authorList>
            <person name="Morrison H.G."/>
            <person name="McArthur A.G."/>
            <person name="Gillin F.D."/>
            <person name="Aley S.B."/>
            <person name="Adam R.D."/>
            <person name="Olsen G.J."/>
            <person name="Best A.A."/>
            <person name="Cande W.Z."/>
            <person name="Chen F."/>
            <person name="Cipriano M.J."/>
            <person name="Davids B.J."/>
            <person name="Dawson S.C."/>
            <person name="Elmendorf H.G."/>
            <person name="Hehl A.B."/>
            <person name="Holder M.E."/>
            <person name="Huse S.M."/>
            <person name="Kim U.U."/>
            <person name="Lasek-Nesselquist E."/>
            <person name="Manning G."/>
            <person name="Nigam A."/>
            <person name="Nixon J.E.J."/>
            <person name="Palm D."/>
            <person name="Passamaneck N.E."/>
            <person name="Prabhu A."/>
            <person name="Reich C.I."/>
            <person name="Reiner D.S."/>
            <person name="Samuelson J."/>
            <person name="Svard S.G."/>
            <person name="Sogin M.L."/>
        </authorList>
    </citation>
    <scope>NUCLEOTIDE SEQUENCE [LARGE SCALE GENOMIC DNA]</scope>
    <source>
        <strain>ATCC 50803 / WB clone C6</strain>
    </source>
</reference>
<reference key="2">
    <citation type="journal article" date="2006" name="Science">
        <title>Structural basis for double-stranded RNA processing by Dicer.</title>
        <authorList>
            <person name="Macrae I.J."/>
            <person name="Zhou K."/>
            <person name="Li F."/>
            <person name="Repic A."/>
            <person name="Brooks A.N."/>
            <person name="Cande W.Z."/>
            <person name="Adams P.D."/>
            <person name="Doudna J.A."/>
        </authorList>
    </citation>
    <scope>X-RAY CRYSTALLOGRAPHY (3.33 ANGSTROMS) IN COMPLEX WITH MANGANESE</scope>
    <scope>FUNCTION</scope>
    <scope>CATALYTIC ACTIVITY</scope>
    <scope>COFACTOR</scope>
    <scope>SUBUNIT</scope>
</reference>
<reference key="3">
    <citation type="journal article" date="2007" name="Acta Crystallogr. D">
        <title>An unusual case of pseudo-merohedral twinning in orthorhombic crystals of Dicer.</title>
        <authorList>
            <person name="MacRae I.J."/>
            <person name="Doudna J.A."/>
        </authorList>
    </citation>
    <scope>X-RAY CRYSTALLOGRAPHY (3.0 ANGSTROMS) IN COMPLEX WITH MANGANESE</scope>
    <scope>SUBUNIT</scope>
    <scope>COFACTOR</scope>
</reference>
<sequence>MHALGHCCTVVTTRGPSHWLLLLDTHLGTLPGFKVSAGRGLPAAEVYFEAGPRVSLSRTDATIVAVYQSILFQLLGPTFPASWTEIGATMPHNEYTFPRFISNPPQFATLAFLPLLSPTSPLDLRALMVTAQLMCDAKRLSDEYTDYSTLSASLHGRMVATPEISWSLYVVLGIDSTQTSLSYFTRANESITYMRYYATAHNIHLRAADLPLVAAVRLDDLKDHQIPAPGSWDDLAPKLRFLPPELCLLLPDEFDLIRVQALQFLPEIAKHICDIQNTICALDKSFPDCGRIGGERYFAITAGLRLDQGRGRGLAGWRTPFGPFGVSHTDVFQRLELLGDAVLGFIVTARLLCLFPDASVGTLVELKMELVRNEALNYLVQTLGLPQLAEFSNNLVAKSKTWADMYEEIVGSIFTGPNGIYGCEEFLAKTLMSPEHSKTVGSACPDAVTKASKRVCMGEAGAHEFRSLVDYACEQGISVFCSSRVSTMFLERLRDIPAEDMLDWYRLGIQFSHRSGLSGPGGVVSVIDIMTHLARGLWLGSPGFYVEQQTDKNESACPPTIPVLYIYHRSVQCPVLYGSLTETPTGPVASKVLALYEKILAYESSGGSKHIAAQTVSRSLAVPIPSGTIPFLIRLLQIALTPHVYQKLELLGDAFLKCSLALHLHALHPTLTEGALTRMRQSAETNSVLGRLTKRFPSVVSEVIIESHPKIQPDSKVYGDTFEAILAAILLACGEEAAGAFVREHVLPQVVADA</sequence>
<proteinExistence type="evidence at protein level"/>
<evidence type="ECO:0000255" key="1">
    <source>
        <dbReference type="PROSITE-ProRule" id="PRU00142"/>
    </source>
</evidence>
<evidence type="ECO:0000255" key="2">
    <source>
        <dbReference type="PROSITE-ProRule" id="PRU00177"/>
    </source>
</evidence>
<evidence type="ECO:0000269" key="3">
    <source>
    </source>
</evidence>
<evidence type="ECO:0000269" key="4">
    <source>
    </source>
</evidence>
<evidence type="ECO:0007744" key="5">
    <source>
        <dbReference type="PDB" id="2FFL"/>
    </source>
</evidence>
<evidence type="ECO:0007744" key="6">
    <source>
        <dbReference type="PDB" id="2QVW"/>
    </source>
</evidence>
<evidence type="ECO:0007829" key="7">
    <source>
        <dbReference type="PDB" id="2FFL"/>
    </source>
</evidence>
<evidence type="ECO:0007829" key="8">
    <source>
        <dbReference type="PDB" id="2QVW"/>
    </source>
</evidence>
<organism>
    <name type="scientific">Giardia intestinalis (strain ATCC 50803 / WB clone C6)</name>
    <name type="common">Giardia lamblia</name>
    <dbReference type="NCBI Taxonomy" id="184922"/>
    <lineage>
        <taxon>Eukaryota</taxon>
        <taxon>Metamonada</taxon>
        <taxon>Diplomonadida</taxon>
        <taxon>Hexamitidae</taxon>
        <taxon>Giardiinae</taxon>
        <taxon>Giardia</taxon>
    </lineage>
</organism>
<name>DCL_GIAIC</name>
<protein>
    <recommendedName>
        <fullName>Endoribonuclease Dicer-like</fullName>
        <ecNumber evidence="3">3.1.26.-</ecNumber>
    </recommendedName>
</protein>
<keyword id="KW-0002">3D-structure</keyword>
<keyword id="KW-0255">Endonuclease</keyword>
<keyword id="KW-0378">Hydrolase</keyword>
<keyword id="KW-0460">Magnesium</keyword>
<keyword id="KW-0464">Manganese</keyword>
<keyword id="KW-0479">Metal-binding</keyword>
<keyword id="KW-0540">Nuclease</keyword>
<keyword id="KW-0547">Nucleotide-binding</keyword>
<keyword id="KW-0677">Repeat</keyword>
<keyword id="KW-0694">RNA-binding</keyword>
<keyword id="KW-0943">RNA-mediated gene silencing</keyword>
<gene>
    <name type="ORF">GL50803_103887</name>
</gene>
<feature type="chain" id="PRO_0000371303" description="Endoribonuclease Dicer-like">
    <location>
        <begin position="1"/>
        <end position="754"/>
    </location>
</feature>
<feature type="domain" description="PAZ" evidence="1">
    <location>
        <begin position="132"/>
        <end position="251"/>
    </location>
</feature>
<feature type="domain" description="RNase III 1" evidence="2">
    <location>
        <begin position="298"/>
        <end position="418"/>
    </location>
</feature>
<feature type="domain" description="RNase III 2" evidence="2">
    <location>
        <begin position="613"/>
        <end position="734"/>
    </location>
</feature>
<feature type="binding site" evidence="3 4 5 6">
    <location>
        <position position="336"/>
    </location>
    <ligand>
        <name>Mn(2+)</name>
        <dbReference type="ChEBI" id="CHEBI:29035"/>
        <label>1</label>
    </ligand>
</feature>
<feature type="binding site" evidence="3 4 5 6">
    <location>
        <position position="404"/>
    </location>
    <ligand>
        <name>Mn(2+)</name>
        <dbReference type="ChEBI" id="CHEBI:29035"/>
        <label>1</label>
    </ligand>
</feature>
<feature type="binding site" evidence="3 4 5 6">
    <location>
        <position position="407"/>
    </location>
    <ligand>
        <name>Mn(2+)</name>
        <dbReference type="ChEBI" id="CHEBI:29035"/>
        <label>1</label>
    </ligand>
</feature>
<feature type="binding site" evidence="3 4 5 6">
    <location>
        <position position="649"/>
    </location>
    <ligand>
        <name>Mn(2+)</name>
        <dbReference type="ChEBI" id="CHEBI:29035"/>
        <label>2</label>
    </ligand>
</feature>
<feature type="binding site" evidence="3 4 5 6">
    <location>
        <position position="720"/>
    </location>
    <ligand>
        <name>Mn(2+)</name>
        <dbReference type="ChEBI" id="CHEBI:29035"/>
        <label>2</label>
    </ligand>
</feature>
<feature type="binding site" evidence="3 4 5 6">
    <location>
        <position position="723"/>
    </location>
    <ligand>
        <name>Mn(2+)</name>
        <dbReference type="ChEBI" id="CHEBI:29035"/>
        <label>2</label>
    </ligand>
</feature>
<feature type="strand" evidence="8">
    <location>
        <begin position="4"/>
        <end position="11"/>
    </location>
</feature>
<feature type="strand" evidence="8">
    <location>
        <begin position="16"/>
        <end position="25"/>
    </location>
</feature>
<feature type="strand" evidence="8">
    <location>
        <begin position="33"/>
        <end position="35"/>
    </location>
</feature>
<feature type="strand" evidence="7">
    <location>
        <begin position="39"/>
        <end position="41"/>
    </location>
</feature>
<feature type="strand" evidence="8">
    <location>
        <begin position="44"/>
        <end position="47"/>
    </location>
</feature>
<feature type="helix" evidence="8">
    <location>
        <begin position="58"/>
        <end position="75"/>
    </location>
</feature>
<feature type="helix" evidence="8">
    <location>
        <begin position="83"/>
        <end position="88"/>
    </location>
</feature>
<feature type="helix" evidence="8">
    <location>
        <begin position="92"/>
        <end position="94"/>
    </location>
</feature>
<feature type="strand" evidence="8">
    <location>
        <begin position="95"/>
        <end position="97"/>
    </location>
</feature>
<feature type="strand" evidence="8">
    <location>
        <begin position="110"/>
        <end position="117"/>
    </location>
</feature>
<feature type="helix" evidence="8">
    <location>
        <begin position="125"/>
        <end position="135"/>
    </location>
</feature>
<feature type="helix" evidence="8">
    <location>
        <begin position="140"/>
        <end position="142"/>
    </location>
</feature>
<feature type="helix" evidence="8">
    <location>
        <begin position="144"/>
        <end position="146"/>
    </location>
</feature>
<feature type="turn" evidence="8">
    <location>
        <begin position="151"/>
        <end position="153"/>
    </location>
</feature>
<feature type="strand" evidence="8">
    <location>
        <begin position="158"/>
        <end position="160"/>
    </location>
</feature>
<feature type="turn" evidence="8">
    <location>
        <begin position="162"/>
        <end position="166"/>
    </location>
</feature>
<feature type="strand" evidence="8">
    <location>
        <begin position="168"/>
        <end position="179"/>
    </location>
</feature>
<feature type="strand" evidence="8">
    <location>
        <begin position="182"/>
        <end position="186"/>
    </location>
</feature>
<feature type="strand" evidence="8">
    <location>
        <begin position="189"/>
        <end position="192"/>
    </location>
</feature>
<feature type="helix" evidence="8">
    <location>
        <begin position="193"/>
        <end position="199"/>
    </location>
</feature>
<feature type="strand" evidence="8">
    <location>
        <begin position="210"/>
        <end position="217"/>
    </location>
</feature>
<feature type="turn" evidence="8">
    <location>
        <begin position="218"/>
        <end position="223"/>
    </location>
</feature>
<feature type="strand" evidence="8">
    <location>
        <begin position="240"/>
        <end position="242"/>
    </location>
</feature>
<feature type="turn" evidence="8">
    <location>
        <begin position="244"/>
        <end position="246"/>
    </location>
</feature>
<feature type="helix" evidence="8">
    <location>
        <begin position="258"/>
        <end position="262"/>
    </location>
</feature>
<feature type="helix" evidence="8">
    <location>
        <begin position="265"/>
        <end position="282"/>
    </location>
</feature>
<feature type="helix" evidence="8">
    <location>
        <begin position="283"/>
        <end position="285"/>
    </location>
</feature>
<feature type="helix" evidence="8">
    <location>
        <begin position="293"/>
        <end position="304"/>
    </location>
</feature>
<feature type="strand" evidence="8">
    <location>
        <begin position="313"/>
        <end position="315"/>
    </location>
</feature>
<feature type="strand" evidence="8">
    <location>
        <begin position="318"/>
        <end position="320"/>
    </location>
</feature>
<feature type="helix" evidence="8">
    <location>
        <begin position="323"/>
        <end position="325"/>
    </location>
</feature>
<feature type="helix" evidence="8">
    <location>
        <begin position="328"/>
        <end position="354"/>
    </location>
</feature>
<feature type="helix" evidence="8">
    <location>
        <begin position="360"/>
        <end position="371"/>
    </location>
</feature>
<feature type="helix" evidence="8">
    <location>
        <begin position="373"/>
        <end position="382"/>
    </location>
</feature>
<feature type="turn" evidence="8">
    <location>
        <begin position="386"/>
        <end position="388"/>
    </location>
</feature>
<feature type="helix" evidence="8">
    <location>
        <begin position="402"/>
        <end position="415"/>
    </location>
</feature>
<feature type="helix" evidence="8">
    <location>
        <begin position="419"/>
        <end position="431"/>
    </location>
</feature>
<feature type="helix" evidence="8">
    <location>
        <begin position="434"/>
        <end position="436"/>
    </location>
</feature>
<feature type="helix" evidence="8">
    <location>
        <begin position="446"/>
        <end position="456"/>
    </location>
</feature>
<feature type="helix" evidence="8">
    <location>
        <begin position="462"/>
        <end position="471"/>
    </location>
</feature>
<feature type="turn" evidence="8">
    <location>
        <begin position="472"/>
        <end position="476"/>
    </location>
</feature>
<feature type="strand" evidence="8">
    <location>
        <begin position="480"/>
        <end position="483"/>
    </location>
</feature>
<feature type="helix" evidence="8">
    <location>
        <begin position="484"/>
        <end position="495"/>
    </location>
</feature>
<feature type="helix" evidence="8">
    <location>
        <begin position="498"/>
        <end position="514"/>
    </location>
</feature>
<feature type="helix" evidence="8">
    <location>
        <begin position="526"/>
        <end position="540"/>
    </location>
</feature>
<feature type="strand" evidence="8">
    <location>
        <begin position="543"/>
        <end position="545"/>
    </location>
</feature>
<feature type="strand" evidence="8">
    <location>
        <begin position="560"/>
        <end position="562"/>
    </location>
</feature>
<feature type="turn" evidence="8">
    <location>
        <begin position="565"/>
        <end position="568"/>
    </location>
</feature>
<feature type="strand" evidence="8">
    <location>
        <begin position="569"/>
        <end position="571"/>
    </location>
</feature>
<feature type="turn" evidence="8">
    <location>
        <begin position="574"/>
        <end position="576"/>
    </location>
</feature>
<feature type="turn" evidence="8">
    <location>
        <begin position="586"/>
        <end position="588"/>
    </location>
</feature>
<feature type="helix" evidence="8">
    <location>
        <begin position="589"/>
        <end position="600"/>
    </location>
</feature>
<feature type="helix" evidence="8">
    <location>
        <begin position="609"/>
        <end position="618"/>
    </location>
</feature>
<feature type="helix" evidence="8">
    <location>
        <begin position="629"/>
        <end position="640"/>
    </location>
</feature>
<feature type="helix" evidence="8">
    <location>
        <begin position="643"/>
        <end position="645"/>
    </location>
</feature>
<feature type="helix" evidence="8">
    <location>
        <begin position="646"/>
        <end position="667"/>
    </location>
</feature>
<feature type="helix" evidence="8">
    <location>
        <begin position="673"/>
        <end position="682"/>
    </location>
</feature>
<feature type="helix" evidence="8">
    <location>
        <begin position="686"/>
        <end position="694"/>
    </location>
</feature>
<feature type="helix" evidence="8">
    <location>
        <begin position="699"/>
        <end position="707"/>
    </location>
</feature>
<feature type="strand" evidence="7">
    <location>
        <begin position="708"/>
        <end position="710"/>
    </location>
</feature>
<feature type="helix" evidence="8">
    <location>
        <begin position="716"/>
        <end position="733"/>
    </location>
</feature>
<feature type="helix" evidence="8">
    <location>
        <begin position="735"/>
        <end position="745"/>
    </location>
</feature>
<feature type="helix" evidence="8">
    <location>
        <begin position="747"/>
        <end position="749"/>
    </location>
</feature>
<dbReference type="EC" id="3.1.26.-" evidence="3"/>
<dbReference type="EMBL" id="AACB02000033">
    <property type="protein sequence ID" value="EDO77862.1"/>
    <property type="molecule type" value="Genomic_DNA"/>
</dbReference>
<dbReference type="RefSeq" id="XP_001705536.1">
    <property type="nucleotide sequence ID" value="XM_001705484.1"/>
</dbReference>
<dbReference type="PDB" id="2FFL">
    <property type="method" value="X-ray"/>
    <property type="resolution" value="3.33 A"/>
    <property type="chains" value="A/B/C/D=1-754"/>
</dbReference>
<dbReference type="PDB" id="2QVW">
    <property type="method" value="X-ray"/>
    <property type="resolution" value="3.00 A"/>
    <property type="chains" value="A/B/C/D=1-754"/>
</dbReference>
<dbReference type="PDBsum" id="2FFL"/>
<dbReference type="PDBsum" id="2QVW"/>
<dbReference type="SMR" id="A8BQJ3"/>
<dbReference type="STRING" id="184922.A8BQJ3"/>
<dbReference type="EnsemblProtists" id="EDO77862">
    <property type="protein sequence ID" value="EDO77862"/>
    <property type="gene ID" value="GL50803_103887"/>
</dbReference>
<dbReference type="GeneID" id="5698409"/>
<dbReference type="KEGG" id="gla:GL50803_00103887"/>
<dbReference type="VEuPathDB" id="GiardiaDB:GL50803_103887"/>
<dbReference type="HOGENOM" id="CLU_369381_0_0_1"/>
<dbReference type="OMA" id="WADMYEE"/>
<dbReference type="BRENDA" id="3.1.26.3">
    <property type="organism ID" value="2401"/>
</dbReference>
<dbReference type="EvolutionaryTrace" id="A8BQJ3"/>
<dbReference type="GO" id="GO:0046872">
    <property type="term" value="F:metal ion binding"/>
    <property type="evidence" value="ECO:0007669"/>
    <property type="project" value="UniProtKB-KW"/>
</dbReference>
<dbReference type="GO" id="GO:0000166">
    <property type="term" value="F:nucleotide binding"/>
    <property type="evidence" value="ECO:0007669"/>
    <property type="project" value="UniProtKB-KW"/>
</dbReference>
<dbReference type="GO" id="GO:0004525">
    <property type="term" value="F:ribonuclease III activity"/>
    <property type="evidence" value="ECO:0007669"/>
    <property type="project" value="InterPro"/>
</dbReference>
<dbReference type="GO" id="GO:0003723">
    <property type="term" value="F:RNA binding"/>
    <property type="evidence" value="ECO:0007669"/>
    <property type="project" value="UniProtKB-KW"/>
</dbReference>
<dbReference type="GO" id="GO:0031047">
    <property type="term" value="P:regulatory ncRNA-mediated gene silencing"/>
    <property type="evidence" value="ECO:0007669"/>
    <property type="project" value="UniProtKB-KW"/>
</dbReference>
<dbReference type="GO" id="GO:0006396">
    <property type="term" value="P:RNA processing"/>
    <property type="evidence" value="ECO:0007669"/>
    <property type="project" value="InterPro"/>
</dbReference>
<dbReference type="CDD" id="cd00593">
    <property type="entry name" value="RIBOc"/>
    <property type="match status" value="2"/>
</dbReference>
<dbReference type="Gene3D" id="1.10.1740.150">
    <property type="match status" value="2"/>
</dbReference>
<dbReference type="Gene3D" id="6.10.250.1440">
    <property type="match status" value="1"/>
</dbReference>
<dbReference type="Gene3D" id="2.170.260.10">
    <property type="entry name" value="paz domain"/>
    <property type="match status" value="1"/>
</dbReference>
<dbReference type="Gene3D" id="1.10.1520.10">
    <property type="entry name" value="Ribonuclease III domain"/>
    <property type="match status" value="2"/>
</dbReference>
<dbReference type="InterPro" id="IPR041279">
    <property type="entry name" value="Dicer_N"/>
</dbReference>
<dbReference type="InterPro" id="IPR003100">
    <property type="entry name" value="PAZ_dom"/>
</dbReference>
<dbReference type="InterPro" id="IPR036085">
    <property type="entry name" value="PAZ_dom_sf"/>
</dbReference>
<dbReference type="InterPro" id="IPR000999">
    <property type="entry name" value="RNase_III_dom"/>
</dbReference>
<dbReference type="InterPro" id="IPR036389">
    <property type="entry name" value="RNase_III_sf"/>
</dbReference>
<dbReference type="PANTHER" id="PTHR14950">
    <property type="entry name" value="DICER-RELATED"/>
    <property type="match status" value="1"/>
</dbReference>
<dbReference type="Pfam" id="PF17895">
    <property type="entry name" value="Dicer_N"/>
    <property type="match status" value="1"/>
</dbReference>
<dbReference type="Pfam" id="PF02170">
    <property type="entry name" value="PAZ"/>
    <property type="match status" value="1"/>
</dbReference>
<dbReference type="Pfam" id="PF00636">
    <property type="entry name" value="Ribonuclease_3"/>
    <property type="match status" value="2"/>
</dbReference>
<dbReference type="SMART" id="SM00949">
    <property type="entry name" value="PAZ"/>
    <property type="match status" value="1"/>
</dbReference>
<dbReference type="SMART" id="SM00535">
    <property type="entry name" value="RIBOc"/>
    <property type="match status" value="2"/>
</dbReference>
<dbReference type="SUPFAM" id="SSF101690">
    <property type="entry name" value="PAZ domain"/>
    <property type="match status" value="1"/>
</dbReference>
<dbReference type="SUPFAM" id="SSF69065">
    <property type="entry name" value="RNase III domain-like"/>
    <property type="match status" value="2"/>
</dbReference>
<dbReference type="PROSITE" id="PS50821">
    <property type="entry name" value="PAZ"/>
    <property type="match status" value="1"/>
</dbReference>
<dbReference type="PROSITE" id="PS50142">
    <property type="entry name" value="RNASE_3_2"/>
    <property type="match status" value="2"/>
</dbReference>
<comment type="function">
    <text evidence="3">Involved in cleaving double-stranded RNA in the RNA interference (RNAi) pathway. It produces 21 to 23 bp dsRNAs (siRNAs) which target the selective destruction of homologous RNAs.</text>
</comment>
<comment type="cofactor">
    <cofactor evidence="3">
        <name>Mg(2+)</name>
        <dbReference type="ChEBI" id="CHEBI:18420"/>
    </cofactor>
    <cofactor evidence="3">
        <name>Mn(2+)</name>
        <dbReference type="ChEBI" id="CHEBI:29035"/>
    </cofactor>
    <text evidence="3 4">Binds 2 magnesium or manganese ions per subunit.</text>
</comment>
<comment type="subunit">
    <text evidence="3 4">Homodimer.</text>
</comment>
<accession>A8BQJ3</accession>
<accession>Q86QW6</accession>